<proteinExistence type="inferred from homology"/>
<sequence>MKPSIVAKLEALHERHEEVQALLGDAQTIADQERFRALSREYAQLSDVSRCFTDWQQVQEDIETAQMMLDDPEMREMAQDELREAKEKSEQLEQQLQVLLLPKDPDDERNAFLEVRAGTGGDEAALFAGDLFRMYSRYAEARRWRVEIMSASEGEHGGYKEIIAKISGDGVYGRLKFESGGHRVQRVPATESQGRIHTSACTVAVMPELPDAELPDINPADLRIDTFRSSGAGGQHVNTTDSAIRITHLPTGIVVECQDERSQHKNKAKALSVLGARIHAAEMAKRQQAEASTRRNLLGSGDRSDRNRTYNFPQGRVTDHRINLTLYRLDEVMEGKLDMLIEPIIQEHQADQLAALSEQE</sequence>
<keyword id="KW-0963">Cytoplasm</keyword>
<keyword id="KW-0488">Methylation</keyword>
<keyword id="KW-0648">Protein biosynthesis</keyword>
<evidence type="ECO:0000255" key="1">
    <source>
        <dbReference type="HAMAP-Rule" id="MF_00093"/>
    </source>
</evidence>
<evidence type="ECO:0000256" key="2">
    <source>
        <dbReference type="SAM" id="MobiDB-lite"/>
    </source>
</evidence>
<organism>
    <name type="scientific">Escherichia coli (strain K12 / DH10B)</name>
    <dbReference type="NCBI Taxonomy" id="316385"/>
    <lineage>
        <taxon>Bacteria</taxon>
        <taxon>Pseudomonadati</taxon>
        <taxon>Pseudomonadota</taxon>
        <taxon>Gammaproteobacteria</taxon>
        <taxon>Enterobacterales</taxon>
        <taxon>Enterobacteriaceae</taxon>
        <taxon>Escherichia</taxon>
    </lineage>
</organism>
<gene>
    <name evidence="1" type="primary">prfA</name>
    <name type="ordered locus">ECDH10B_1264</name>
</gene>
<accession>B1XAQ2</accession>
<feature type="chain" id="PRO_1000093452" description="Peptide chain release factor 1">
    <location>
        <begin position="1"/>
        <end position="360"/>
    </location>
</feature>
<feature type="region of interest" description="Disordered" evidence="2">
    <location>
        <begin position="284"/>
        <end position="313"/>
    </location>
</feature>
<feature type="modified residue" description="N5-methylglutamine" evidence="1">
    <location>
        <position position="235"/>
    </location>
</feature>
<protein>
    <recommendedName>
        <fullName evidence="1">Peptide chain release factor 1</fullName>
        <shortName evidence="1">RF-1</shortName>
    </recommendedName>
</protein>
<comment type="function">
    <text evidence="1">Peptide chain release factor 1 directs the termination of translation in response to the peptide chain termination codons UAG and UAA.</text>
</comment>
<comment type="subcellular location">
    <subcellularLocation>
        <location evidence="1">Cytoplasm</location>
    </subcellularLocation>
</comment>
<comment type="PTM">
    <text evidence="1">Methylated by PrmC. Methylation increases the termination efficiency of RF1.</text>
</comment>
<comment type="similarity">
    <text evidence="1">Belongs to the prokaryotic/mitochondrial release factor family.</text>
</comment>
<name>RF1_ECODH</name>
<reference key="1">
    <citation type="journal article" date="2008" name="J. Bacteriol.">
        <title>The complete genome sequence of Escherichia coli DH10B: insights into the biology of a laboratory workhorse.</title>
        <authorList>
            <person name="Durfee T."/>
            <person name="Nelson R."/>
            <person name="Baldwin S."/>
            <person name="Plunkett G. III"/>
            <person name="Burland V."/>
            <person name="Mau B."/>
            <person name="Petrosino J.F."/>
            <person name="Qin X."/>
            <person name="Muzny D.M."/>
            <person name="Ayele M."/>
            <person name="Gibbs R.A."/>
            <person name="Csorgo B."/>
            <person name="Posfai G."/>
            <person name="Weinstock G.M."/>
            <person name="Blattner F.R."/>
        </authorList>
    </citation>
    <scope>NUCLEOTIDE SEQUENCE [LARGE SCALE GENOMIC DNA]</scope>
    <source>
        <strain>K12 / DH10B</strain>
    </source>
</reference>
<dbReference type="EMBL" id="CP000948">
    <property type="protein sequence ID" value="ACB02381.1"/>
    <property type="molecule type" value="Genomic_DNA"/>
</dbReference>
<dbReference type="RefSeq" id="WP_000804726.1">
    <property type="nucleotide sequence ID" value="NC_010473.1"/>
</dbReference>
<dbReference type="SMR" id="B1XAQ2"/>
<dbReference type="GeneID" id="93775276"/>
<dbReference type="KEGG" id="ecd:ECDH10B_1264"/>
<dbReference type="HOGENOM" id="CLU_036856_0_1_6"/>
<dbReference type="GO" id="GO:0005737">
    <property type="term" value="C:cytoplasm"/>
    <property type="evidence" value="ECO:0007669"/>
    <property type="project" value="UniProtKB-SubCell"/>
</dbReference>
<dbReference type="GO" id="GO:0016149">
    <property type="term" value="F:translation release factor activity, codon specific"/>
    <property type="evidence" value="ECO:0007669"/>
    <property type="project" value="UniProtKB-UniRule"/>
</dbReference>
<dbReference type="FunFam" id="3.30.160.20:FF:000004">
    <property type="entry name" value="Peptide chain release factor 1"/>
    <property type="match status" value="1"/>
</dbReference>
<dbReference type="FunFam" id="3.30.70.1660:FF:000002">
    <property type="entry name" value="Peptide chain release factor 1"/>
    <property type="match status" value="1"/>
</dbReference>
<dbReference type="FunFam" id="3.30.70.1660:FF:000004">
    <property type="entry name" value="Peptide chain release factor 1"/>
    <property type="match status" value="1"/>
</dbReference>
<dbReference type="Gene3D" id="3.30.160.20">
    <property type="match status" value="1"/>
</dbReference>
<dbReference type="Gene3D" id="3.30.70.1660">
    <property type="match status" value="1"/>
</dbReference>
<dbReference type="Gene3D" id="6.10.140.1950">
    <property type="match status" value="1"/>
</dbReference>
<dbReference type="HAMAP" id="MF_00093">
    <property type="entry name" value="Rel_fac_1"/>
    <property type="match status" value="1"/>
</dbReference>
<dbReference type="InterPro" id="IPR005139">
    <property type="entry name" value="PCRF"/>
</dbReference>
<dbReference type="InterPro" id="IPR000352">
    <property type="entry name" value="Pep_chain_release_fac_I"/>
</dbReference>
<dbReference type="InterPro" id="IPR045853">
    <property type="entry name" value="Pep_chain_release_fac_I_sf"/>
</dbReference>
<dbReference type="InterPro" id="IPR050057">
    <property type="entry name" value="Prokaryotic/Mito_RF"/>
</dbReference>
<dbReference type="InterPro" id="IPR004373">
    <property type="entry name" value="RF-1"/>
</dbReference>
<dbReference type="NCBIfam" id="TIGR00019">
    <property type="entry name" value="prfA"/>
    <property type="match status" value="1"/>
</dbReference>
<dbReference type="NCBIfam" id="NF001859">
    <property type="entry name" value="PRK00591.1"/>
    <property type="match status" value="1"/>
</dbReference>
<dbReference type="PANTHER" id="PTHR43804">
    <property type="entry name" value="LD18447P"/>
    <property type="match status" value="1"/>
</dbReference>
<dbReference type="PANTHER" id="PTHR43804:SF7">
    <property type="entry name" value="LD18447P"/>
    <property type="match status" value="1"/>
</dbReference>
<dbReference type="Pfam" id="PF03462">
    <property type="entry name" value="PCRF"/>
    <property type="match status" value="1"/>
</dbReference>
<dbReference type="Pfam" id="PF00472">
    <property type="entry name" value="RF-1"/>
    <property type="match status" value="1"/>
</dbReference>
<dbReference type="SMART" id="SM00937">
    <property type="entry name" value="PCRF"/>
    <property type="match status" value="1"/>
</dbReference>
<dbReference type="SUPFAM" id="SSF75620">
    <property type="entry name" value="Release factor"/>
    <property type="match status" value="1"/>
</dbReference>
<dbReference type="PROSITE" id="PS00745">
    <property type="entry name" value="RF_PROK_I"/>
    <property type="match status" value="1"/>
</dbReference>